<evidence type="ECO:0000250" key="1"/>
<evidence type="ECO:0000255" key="2">
    <source>
        <dbReference type="HAMAP-Rule" id="MF_00403"/>
    </source>
</evidence>
<evidence type="ECO:0000256" key="3">
    <source>
        <dbReference type="SAM" id="MobiDB-lite"/>
    </source>
</evidence>
<evidence type="ECO:0000305" key="4"/>
<accession>A8G711</accession>
<proteinExistence type="inferred from homology"/>
<protein>
    <recommendedName>
        <fullName evidence="2">Small ribosomal subunit protein uS12</fullName>
    </recommendedName>
    <alternativeName>
        <fullName evidence="4">30S ribosomal protein S12</fullName>
    </alternativeName>
</protein>
<sequence length="124" mass="13721">MPTISQLVGSERKRLTKKTKSPALKACPERRGVCTRVYTSTPKKPNSALRKVARVRLTSGFEVTAYIPGIGHNLQEHSVVLLRGGRVKDLPGVRYHIIRGTLDTAGVKDRRQSRSKYGAKAPKD</sequence>
<dbReference type="EMBL" id="CP000825">
    <property type="protein sequence ID" value="ABV51392.1"/>
    <property type="molecule type" value="Genomic_DNA"/>
</dbReference>
<dbReference type="RefSeq" id="WP_002805703.1">
    <property type="nucleotide sequence ID" value="NC_009840.1"/>
</dbReference>
<dbReference type="SMR" id="A8G711"/>
<dbReference type="STRING" id="93060.P9215_17791"/>
<dbReference type="KEGG" id="pmh:P9215_17791"/>
<dbReference type="eggNOG" id="COG0048">
    <property type="taxonomic scope" value="Bacteria"/>
</dbReference>
<dbReference type="HOGENOM" id="CLU_104295_1_2_3"/>
<dbReference type="OrthoDB" id="9802366at2"/>
<dbReference type="Proteomes" id="UP000002014">
    <property type="component" value="Chromosome"/>
</dbReference>
<dbReference type="GO" id="GO:0015935">
    <property type="term" value="C:small ribosomal subunit"/>
    <property type="evidence" value="ECO:0007669"/>
    <property type="project" value="InterPro"/>
</dbReference>
<dbReference type="GO" id="GO:0019843">
    <property type="term" value="F:rRNA binding"/>
    <property type="evidence" value="ECO:0007669"/>
    <property type="project" value="UniProtKB-UniRule"/>
</dbReference>
<dbReference type="GO" id="GO:0003735">
    <property type="term" value="F:structural constituent of ribosome"/>
    <property type="evidence" value="ECO:0007669"/>
    <property type="project" value="InterPro"/>
</dbReference>
<dbReference type="GO" id="GO:0000049">
    <property type="term" value="F:tRNA binding"/>
    <property type="evidence" value="ECO:0007669"/>
    <property type="project" value="UniProtKB-UniRule"/>
</dbReference>
<dbReference type="GO" id="GO:0006412">
    <property type="term" value="P:translation"/>
    <property type="evidence" value="ECO:0007669"/>
    <property type="project" value="UniProtKB-UniRule"/>
</dbReference>
<dbReference type="CDD" id="cd03368">
    <property type="entry name" value="Ribosomal_S12"/>
    <property type="match status" value="1"/>
</dbReference>
<dbReference type="FunFam" id="2.40.50.140:FF:000001">
    <property type="entry name" value="30S ribosomal protein S12"/>
    <property type="match status" value="1"/>
</dbReference>
<dbReference type="Gene3D" id="2.40.50.140">
    <property type="entry name" value="Nucleic acid-binding proteins"/>
    <property type="match status" value="1"/>
</dbReference>
<dbReference type="HAMAP" id="MF_00403_B">
    <property type="entry name" value="Ribosomal_uS12_B"/>
    <property type="match status" value="1"/>
</dbReference>
<dbReference type="InterPro" id="IPR012340">
    <property type="entry name" value="NA-bd_OB-fold"/>
</dbReference>
<dbReference type="InterPro" id="IPR006032">
    <property type="entry name" value="Ribosomal_uS12"/>
</dbReference>
<dbReference type="InterPro" id="IPR005679">
    <property type="entry name" value="Ribosomal_uS12_bac"/>
</dbReference>
<dbReference type="NCBIfam" id="TIGR00981">
    <property type="entry name" value="rpsL_bact"/>
    <property type="match status" value="1"/>
</dbReference>
<dbReference type="PANTHER" id="PTHR11652">
    <property type="entry name" value="30S RIBOSOMAL PROTEIN S12 FAMILY MEMBER"/>
    <property type="match status" value="1"/>
</dbReference>
<dbReference type="Pfam" id="PF00164">
    <property type="entry name" value="Ribosom_S12_S23"/>
    <property type="match status" value="1"/>
</dbReference>
<dbReference type="PIRSF" id="PIRSF002133">
    <property type="entry name" value="Ribosomal_S12/S23"/>
    <property type="match status" value="1"/>
</dbReference>
<dbReference type="PRINTS" id="PR01034">
    <property type="entry name" value="RIBOSOMALS12"/>
</dbReference>
<dbReference type="SUPFAM" id="SSF50249">
    <property type="entry name" value="Nucleic acid-binding proteins"/>
    <property type="match status" value="1"/>
</dbReference>
<dbReference type="PROSITE" id="PS00055">
    <property type="entry name" value="RIBOSOMAL_S12"/>
    <property type="match status" value="1"/>
</dbReference>
<feature type="chain" id="PRO_1000060817" description="Small ribosomal subunit protein uS12">
    <location>
        <begin position="1"/>
        <end position="124"/>
    </location>
</feature>
<feature type="region of interest" description="Disordered" evidence="3">
    <location>
        <begin position="1"/>
        <end position="26"/>
    </location>
</feature>
<feature type="region of interest" description="Disordered" evidence="3">
    <location>
        <begin position="104"/>
        <end position="124"/>
    </location>
</feature>
<feature type="modified residue" description="3-methylthioaspartic acid" evidence="1">
    <location>
        <position position="89"/>
    </location>
</feature>
<organism>
    <name type="scientific">Prochlorococcus marinus (strain MIT 9215)</name>
    <dbReference type="NCBI Taxonomy" id="93060"/>
    <lineage>
        <taxon>Bacteria</taxon>
        <taxon>Bacillati</taxon>
        <taxon>Cyanobacteriota</taxon>
        <taxon>Cyanophyceae</taxon>
        <taxon>Synechococcales</taxon>
        <taxon>Prochlorococcaceae</taxon>
        <taxon>Prochlorococcus</taxon>
    </lineage>
</organism>
<reference key="1">
    <citation type="journal article" date="2007" name="PLoS Genet.">
        <title>Patterns and implications of gene gain and loss in the evolution of Prochlorococcus.</title>
        <authorList>
            <person name="Kettler G.C."/>
            <person name="Martiny A.C."/>
            <person name="Huang K."/>
            <person name="Zucker J."/>
            <person name="Coleman M.L."/>
            <person name="Rodrigue S."/>
            <person name="Chen F."/>
            <person name="Lapidus A."/>
            <person name="Ferriera S."/>
            <person name="Johnson J."/>
            <person name="Steglich C."/>
            <person name="Church G.M."/>
            <person name="Richardson P."/>
            <person name="Chisholm S.W."/>
        </authorList>
    </citation>
    <scope>NUCLEOTIDE SEQUENCE [LARGE SCALE GENOMIC DNA]</scope>
    <source>
        <strain>MIT 9215</strain>
    </source>
</reference>
<keyword id="KW-0488">Methylation</keyword>
<keyword id="KW-0687">Ribonucleoprotein</keyword>
<keyword id="KW-0689">Ribosomal protein</keyword>
<keyword id="KW-0694">RNA-binding</keyword>
<keyword id="KW-0699">rRNA-binding</keyword>
<keyword id="KW-0820">tRNA-binding</keyword>
<gene>
    <name evidence="2" type="primary">rpsL</name>
    <name evidence="2" type="synonym">rps12</name>
    <name type="ordered locus">P9215_17791</name>
</gene>
<comment type="function">
    <text evidence="2">With S4 and S5 plays an important role in translational accuracy.</text>
</comment>
<comment type="function">
    <text evidence="2">Interacts with and stabilizes bases of the 16S rRNA that are involved in tRNA selection in the A site and with the mRNA backbone. Located at the interface of the 30S and 50S subunits, it traverses the body of the 30S subunit contacting proteins on the other side and probably holding the rRNA structure together. The combined cluster of proteins S8, S12 and S17 appears to hold together the shoulder and platform of the 30S subunit.</text>
</comment>
<comment type="subunit">
    <text evidence="2">Part of the 30S ribosomal subunit. Contacts proteins S8 and S17. May interact with IF1 in the 30S initiation complex.</text>
</comment>
<comment type="similarity">
    <text evidence="2">Belongs to the universal ribosomal protein uS12 family.</text>
</comment>
<name>RS12_PROM2</name>